<name>RL7_ANASK</name>
<protein>
    <recommendedName>
        <fullName evidence="1">Large ribosomal subunit protein bL12</fullName>
    </recommendedName>
    <alternativeName>
        <fullName evidence="2">50S ribosomal protein L7/L12</fullName>
    </alternativeName>
</protein>
<gene>
    <name evidence="1" type="primary">rplL</name>
    <name type="ordered locus">AnaeK_2272</name>
</gene>
<keyword id="KW-0687">Ribonucleoprotein</keyword>
<keyword id="KW-0689">Ribosomal protein</keyword>
<comment type="function">
    <text evidence="1">Forms part of the ribosomal stalk which helps the ribosome interact with GTP-bound translation factors. Is thus essential for accurate translation.</text>
</comment>
<comment type="subunit">
    <text evidence="1">Homodimer. Part of the ribosomal stalk of the 50S ribosomal subunit. Forms a multimeric L10(L12)X complex, where L10 forms an elongated spine to which 2 to 4 L12 dimers bind in a sequential fashion. Binds GTP-bound translation factors.</text>
</comment>
<comment type="similarity">
    <text evidence="1">Belongs to the bacterial ribosomal protein bL12 family.</text>
</comment>
<organism>
    <name type="scientific">Anaeromyxobacter sp. (strain K)</name>
    <dbReference type="NCBI Taxonomy" id="447217"/>
    <lineage>
        <taxon>Bacteria</taxon>
        <taxon>Pseudomonadati</taxon>
        <taxon>Myxococcota</taxon>
        <taxon>Myxococcia</taxon>
        <taxon>Myxococcales</taxon>
        <taxon>Cystobacterineae</taxon>
        <taxon>Anaeromyxobacteraceae</taxon>
        <taxon>Anaeromyxobacter</taxon>
    </lineage>
</organism>
<accession>B4UDT3</accession>
<dbReference type="EMBL" id="CP001131">
    <property type="protein sequence ID" value="ACG73499.1"/>
    <property type="molecule type" value="Genomic_DNA"/>
</dbReference>
<dbReference type="RefSeq" id="WP_012526296.1">
    <property type="nucleotide sequence ID" value="NC_011145.1"/>
</dbReference>
<dbReference type="SMR" id="B4UDT3"/>
<dbReference type="KEGG" id="ank:AnaeK_2272"/>
<dbReference type="HOGENOM" id="CLU_086499_3_0_7"/>
<dbReference type="OrthoDB" id="9811748at2"/>
<dbReference type="Proteomes" id="UP000001871">
    <property type="component" value="Chromosome"/>
</dbReference>
<dbReference type="GO" id="GO:0005737">
    <property type="term" value="C:cytoplasm"/>
    <property type="evidence" value="ECO:0007669"/>
    <property type="project" value="UniProtKB-ARBA"/>
</dbReference>
<dbReference type="GO" id="GO:1990904">
    <property type="term" value="C:ribonucleoprotein complex"/>
    <property type="evidence" value="ECO:0007669"/>
    <property type="project" value="UniProtKB-KW"/>
</dbReference>
<dbReference type="GO" id="GO:0005840">
    <property type="term" value="C:ribosome"/>
    <property type="evidence" value="ECO:0007669"/>
    <property type="project" value="UniProtKB-KW"/>
</dbReference>
<dbReference type="GO" id="GO:0003729">
    <property type="term" value="F:mRNA binding"/>
    <property type="evidence" value="ECO:0007669"/>
    <property type="project" value="TreeGrafter"/>
</dbReference>
<dbReference type="GO" id="GO:0003735">
    <property type="term" value="F:structural constituent of ribosome"/>
    <property type="evidence" value="ECO:0007669"/>
    <property type="project" value="InterPro"/>
</dbReference>
<dbReference type="GO" id="GO:0006412">
    <property type="term" value="P:translation"/>
    <property type="evidence" value="ECO:0007669"/>
    <property type="project" value="UniProtKB-UniRule"/>
</dbReference>
<dbReference type="CDD" id="cd00387">
    <property type="entry name" value="Ribosomal_L7_L12"/>
    <property type="match status" value="1"/>
</dbReference>
<dbReference type="FunFam" id="1.20.5.710:FF:000007">
    <property type="entry name" value="50S ribosomal protein L7/L12"/>
    <property type="match status" value="1"/>
</dbReference>
<dbReference type="FunFam" id="3.30.1390.10:FF:000001">
    <property type="entry name" value="50S ribosomal protein L7/L12"/>
    <property type="match status" value="1"/>
</dbReference>
<dbReference type="Gene3D" id="3.30.1390.10">
    <property type="match status" value="1"/>
</dbReference>
<dbReference type="Gene3D" id="1.20.5.710">
    <property type="entry name" value="Single helix bin"/>
    <property type="match status" value="1"/>
</dbReference>
<dbReference type="HAMAP" id="MF_00368">
    <property type="entry name" value="Ribosomal_bL12"/>
    <property type="match status" value="1"/>
</dbReference>
<dbReference type="InterPro" id="IPR000206">
    <property type="entry name" value="Ribosomal_bL12"/>
</dbReference>
<dbReference type="InterPro" id="IPR013823">
    <property type="entry name" value="Ribosomal_bL12_C"/>
</dbReference>
<dbReference type="InterPro" id="IPR014719">
    <property type="entry name" value="Ribosomal_bL12_C/ClpS-like"/>
</dbReference>
<dbReference type="InterPro" id="IPR008932">
    <property type="entry name" value="Ribosomal_bL12_oligo"/>
</dbReference>
<dbReference type="InterPro" id="IPR036235">
    <property type="entry name" value="Ribosomal_bL12_oligo_N_sf"/>
</dbReference>
<dbReference type="NCBIfam" id="TIGR00855">
    <property type="entry name" value="L12"/>
    <property type="match status" value="1"/>
</dbReference>
<dbReference type="PANTHER" id="PTHR45987">
    <property type="entry name" value="39S RIBOSOMAL PROTEIN L12"/>
    <property type="match status" value="1"/>
</dbReference>
<dbReference type="PANTHER" id="PTHR45987:SF4">
    <property type="entry name" value="LARGE RIBOSOMAL SUBUNIT PROTEIN BL12M"/>
    <property type="match status" value="1"/>
</dbReference>
<dbReference type="Pfam" id="PF00542">
    <property type="entry name" value="Ribosomal_L12"/>
    <property type="match status" value="1"/>
</dbReference>
<dbReference type="Pfam" id="PF16320">
    <property type="entry name" value="Ribosomal_L12_N"/>
    <property type="match status" value="1"/>
</dbReference>
<dbReference type="SUPFAM" id="SSF54736">
    <property type="entry name" value="ClpS-like"/>
    <property type="match status" value="1"/>
</dbReference>
<dbReference type="SUPFAM" id="SSF48300">
    <property type="entry name" value="Ribosomal protein L7/12, oligomerisation (N-terminal) domain"/>
    <property type="match status" value="1"/>
</dbReference>
<sequence>MADLNAIVEQLSGLTIMEAAELVKQLEEKWGVSAAAAPVMVAAGGGAAAAAPVEEKTEFTVVLVDAGANKINVIKEVRAITGLGLKEAKDLVEGAPKEVKAGVAKAESEELKKKLEAAGAKVEVK</sequence>
<feature type="chain" id="PRO_1000121387" description="Large ribosomal subunit protein bL12">
    <location>
        <begin position="1"/>
        <end position="125"/>
    </location>
</feature>
<evidence type="ECO:0000255" key="1">
    <source>
        <dbReference type="HAMAP-Rule" id="MF_00368"/>
    </source>
</evidence>
<evidence type="ECO:0000305" key="2"/>
<proteinExistence type="inferred from homology"/>
<reference key="1">
    <citation type="submission" date="2008-08" db="EMBL/GenBank/DDBJ databases">
        <title>Complete sequence of Anaeromyxobacter sp. K.</title>
        <authorList>
            <consortium name="US DOE Joint Genome Institute"/>
            <person name="Lucas S."/>
            <person name="Copeland A."/>
            <person name="Lapidus A."/>
            <person name="Glavina del Rio T."/>
            <person name="Dalin E."/>
            <person name="Tice H."/>
            <person name="Bruce D."/>
            <person name="Goodwin L."/>
            <person name="Pitluck S."/>
            <person name="Saunders E."/>
            <person name="Brettin T."/>
            <person name="Detter J.C."/>
            <person name="Han C."/>
            <person name="Larimer F."/>
            <person name="Land M."/>
            <person name="Hauser L."/>
            <person name="Kyrpides N."/>
            <person name="Ovchinnikiva G."/>
            <person name="Beliaev A."/>
        </authorList>
    </citation>
    <scope>NUCLEOTIDE SEQUENCE [LARGE SCALE GENOMIC DNA]</scope>
    <source>
        <strain>K</strain>
    </source>
</reference>